<comment type="function">
    <text evidence="1">ATP-dependent DNA 3'-5' helicase required for initiation of viral DNA replication. It forms a complex with the viral E2 protein. The E1-E2 complex binds to the replication origin which contains binding sites for both proteins. During the initial step, a dimer of E1 interacts with a dimer of protein E2 leading to a complex that binds the viral origin of replication with high specificity. Then, a second dimer of E1 displaces the E2 dimer in an ATP-dependent manner to form the E1 tetramer. Following this, two E1 monomers are added to each half of the site, which results in the formation of two E1 trimers on the viral ori. Subsequently, two hexamers will be created. The double hexamer acts as a bi-directional helicase machinery and unwinds the viral DNA and then recruits the host DNA polymerase to start replication.</text>
</comment>
<comment type="catalytic activity">
    <reaction evidence="1">
        <text>Couples ATP hydrolysis with the unwinding of duplex DNA by translocating in the 3'-5' direction.</text>
        <dbReference type="EC" id="5.6.2.4"/>
    </reaction>
</comment>
<comment type="catalytic activity">
    <reaction evidence="1">
        <text>ATP + H2O = ADP + phosphate + H(+)</text>
        <dbReference type="Rhea" id="RHEA:13065"/>
        <dbReference type="ChEBI" id="CHEBI:15377"/>
        <dbReference type="ChEBI" id="CHEBI:15378"/>
        <dbReference type="ChEBI" id="CHEBI:30616"/>
        <dbReference type="ChEBI" id="CHEBI:43474"/>
        <dbReference type="ChEBI" id="CHEBI:456216"/>
        <dbReference type="EC" id="5.6.2.4"/>
    </reaction>
</comment>
<comment type="subunit">
    <text evidence="1">Can form hexamers. Interacts with E2 protein; this interaction increases E1 DNA binding specificity. Interacts with host DNA polymerase subunit POLA2. Interacts with host single stranded DNA-binding protein RPA1. Interacts with host TOP1; this interaction stimulates the enzymatic activity of TOP1.</text>
</comment>
<comment type="subcellular location">
    <subcellularLocation>
        <location evidence="1">Host nucleus</location>
    </subcellularLocation>
</comment>
<comment type="PTM">
    <text evidence="1">Phosphorylated.</text>
</comment>
<comment type="PTM">
    <text evidence="1">Sumoylated.</text>
</comment>
<comment type="similarity">
    <text evidence="1">Belongs to the papillomaviridae E1 protein family.</text>
</comment>
<sequence length="650" mass="72903">MANCEGTERGDGDEDANRAGGWFLVEAIVEQTTGYQESSDEDENSEDRGEDLVDFIDTRSLGDGQEVPLDLFVQQNARDDAATVQALKRKYTCSPASSSCVSLVDSELSPRLDAISINRGHDRARRRLFDQDSGYGHTQVDIGAPESQVSGGTQHTKGGGGAVQEAEEERVGGDGEAQCSAQTQQTPERAADVLEIFKVSNLRVTLLHKFKELFGLAYGDLVRQFKSDKSICGDWVVCAFGVYHAVAEAVKTLIQPICLYAHIQIQTCQWGMVILMLVRYKCGKSRETVAHSMSTLLNIPEKQMLIEPPKIRSGPCALYWYRTAMGNGSEVYGETPEWIVRQTVVGHAMQETQFSLSTLVQWAYDNDITDESELAYDYAMLGNEDPNAAAFLASNCQAKYIKDAITMCKHYKRAEQARMSMTQWIAHRGRKVADSGDLREIVKYLRYQRVEFVTFMGALKLFLKGVPKKSCMVFYGPSDTGKSLFCMSLLKYLGGAVISYVNSGSHFWLSPLVDAKVGLLDDATYQCWQYIDTYLRTVLDGNAISIDRKHRNLTQLKCPPLMITTNINPLEDQAFKYLHSRIVLFKFMHKCPLKSNGDPVYTLNNENWKSFFQRSWARIEGPDEQEEEEDEDGSTSRPFRCVPGEIARPL</sequence>
<accession>Q81999</accession>
<protein>
    <recommendedName>
        <fullName evidence="1">Replication protein E1</fullName>
        <ecNumber evidence="1">5.6.2.4</ecNumber>
    </recommendedName>
    <alternativeName>
        <fullName evidence="1">ATP-dependent helicase E1</fullName>
    </alternativeName>
    <alternativeName>
        <fullName evidence="1">DNA 3'-5' helicase E1</fullName>
    </alternativeName>
</protein>
<evidence type="ECO:0000255" key="1">
    <source>
        <dbReference type="HAMAP-Rule" id="MF_04000"/>
    </source>
</evidence>
<evidence type="ECO:0000256" key="2">
    <source>
        <dbReference type="SAM" id="MobiDB-lite"/>
    </source>
</evidence>
<dbReference type="EC" id="5.6.2.4" evidence="1"/>
<dbReference type="EMBL" id="X94164">
    <property type="protein sequence ID" value="CAA63875.1"/>
    <property type="molecule type" value="Genomic_DNA"/>
</dbReference>
<dbReference type="SMR" id="Q81999"/>
<dbReference type="Proteomes" id="UP000247192">
    <property type="component" value="Genome"/>
</dbReference>
<dbReference type="GO" id="GO:0042025">
    <property type="term" value="C:host cell nucleus"/>
    <property type="evidence" value="ECO:0007669"/>
    <property type="project" value="UniProtKB-SubCell"/>
</dbReference>
<dbReference type="GO" id="GO:0005524">
    <property type="term" value="F:ATP binding"/>
    <property type="evidence" value="ECO:0007669"/>
    <property type="project" value="UniProtKB-UniRule"/>
</dbReference>
<dbReference type="GO" id="GO:0016887">
    <property type="term" value="F:ATP hydrolysis activity"/>
    <property type="evidence" value="ECO:0007669"/>
    <property type="project" value="RHEA"/>
</dbReference>
<dbReference type="GO" id="GO:0003677">
    <property type="term" value="F:DNA binding"/>
    <property type="evidence" value="ECO:0007669"/>
    <property type="project" value="UniProtKB-UniRule"/>
</dbReference>
<dbReference type="GO" id="GO:0003678">
    <property type="term" value="F:DNA helicase activity"/>
    <property type="evidence" value="ECO:0007669"/>
    <property type="project" value="UniProtKB-UniRule"/>
</dbReference>
<dbReference type="GO" id="GO:0006260">
    <property type="term" value="P:DNA replication"/>
    <property type="evidence" value="ECO:0007669"/>
    <property type="project" value="UniProtKB-UniRule"/>
</dbReference>
<dbReference type="Gene3D" id="3.40.1310.10">
    <property type="match status" value="1"/>
</dbReference>
<dbReference type="Gene3D" id="3.40.50.300">
    <property type="entry name" value="P-loop containing nucleotide triphosphate hydrolases"/>
    <property type="match status" value="1"/>
</dbReference>
<dbReference type="Gene3D" id="1.10.10.510">
    <property type="entry name" value="Zinc finger, large T-antigen D1 domain"/>
    <property type="match status" value="1"/>
</dbReference>
<dbReference type="HAMAP" id="MF_04000">
    <property type="entry name" value="PPV_E1"/>
    <property type="match status" value="1"/>
</dbReference>
<dbReference type="InterPro" id="IPR014015">
    <property type="entry name" value="Helicase_SF3_DNA-vir"/>
</dbReference>
<dbReference type="InterPro" id="IPR027417">
    <property type="entry name" value="P-loop_NTPase"/>
</dbReference>
<dbReference type="InterPro" id="IPR001177">
    <property type="entry name" value="PPV_DNA_helicase_E1_C"/>
</dbReference>
<dbReference type="InterPro" id="IPR014000">
    <property type="entry name" value="PPV_DNA_helicase_E1_N"/>
</dbReference>
<dbReference type="InterPro" id="IPR046832">
    <property type="entry name" value="PPV_E1_DBD"/>
</dbReference>
<dbReference type="InterPro" id="IPR046935">
    <property type="entry name" value="PPV_E1_DBD_sf"/>
</dbReference>
<dbReference type="InterPro" id="IPR016393">
    <property type="entry name" value="Rep_E1_papillomaV"/>
</dbReference>
<dbReference type="InterPro" id="IPR037102">
    <property type="entry name" value="Znf_lg_T-Ag_D1_dom_sf"/>
</dbReference>
<dbReference type="Pfam" id="PF00519">
    <property type="entry name" value="PPV_E1_C"/>
    <property type="match status" value="1"/>
</dbReference>
<dbReference type="Pfam" id="PF20450">
    <property type="entry name" value="PPV_E1_DBD"/>
    <property type="match status" value="1"/>
</dbReference>
<dbReference type="Pfam" id="PF00524">
    <property type="entry name" value="PPV_E1_N"/>
    <property type="match status" value="1"/>
</dbReference>
<dbReference type="PIRSF" id="PIRSF003383">
    <property type="entry name" value="Rep_E1_papillomaV"/>
    <property type="match status" value="1"/>
</dbReference>
<dbReference type="SUPFAM" id="SSF55464">
    <property type="entry name" value="Origin of replication-binding domain, RBD-like"/>
    <property type="match status" value="1"/>
</dbReference>
<dbReference type="SUPFAM" id="SSF52540">
    <property type="entry name" value="P-loop containing nucleoside triphosphate hydrolases"/>
    <property type="match status" value="1"/>
</dbReference>
<dbReference type="PROSITE" id="PS51206">
    <property type="entry name" value="SF3_HELICASE_1"/>
    <property type="match status" value="1"/>
</dbReference>
<reference key="1">
    <citation type="journal article" date="1996" name="Int. J. Cancer">
        <title>Novel HPV types present in oral papillomatous lesions from patients with HIV infection.</title>
        <authorList>
            <person name="Voelter C."/>
            <person name="He Y."/>
            <person name="Delius H."/>
            <person name="Roy-Burman A."/>
            <person name="Greenspan J.S."/>
            <person name="Greenspan D."/>
            <person name="de Villiers E.-M."/>
        </authorList>
    </citation>
    <scope>NUCLEOTIDE SEQUENCE [GENOMIC DNA]</scope>
</reference>
<organismHost>
    <name type="scientific">Homo sapiens</name>
    <name type="common">Human</name>
    <dbReference type="NCBI Taxonomy" id="9606"/>
</organismHost>
<name>VE1_HPV72</name>
<organism>
    <name type="scientific">Human papillomavirus 72</name>
    <dbReference type="NCBI Taxonomy" id="333770"/>
    <lineage>
        <taxon>Viruses</taxon>
        <taxon>Monodnaviria</taxon>
        <taxon>Shotokuvirae</taxon>
        <taxon>Cossaviricota</taxon>
        <taxon>Papovaviricetes</taxon>
        <taxon>Zurhausenvirales</taxon>
        <taxon>Papillomaviridae</taxon>
        <taxon>Firstpapillomavirinae</taxon>
        <taxon>Alphapapillomavirus</taxon>
        <taxon>Alphapapillomavirus 3</taxon>
    </lineage>
</organism>
<feature type="chain" id="PRO_0000133160" description="Replication protein E1">
    <location>
        <begin position="1"/>
        <end position="650"/>
    </location>
</feature>
<feature type="domain" description="SF3 helicase" evidence="1">
    <location>
        <begin position="450"/>
        <end position="600"/>
    </location>
</feature>
<feature type="region of interest" description="Disordered" evidence="2">
    <location>
        <begin position="134"/>
        <end position="184"/>
    </location>
</feature>
<feature type="region of interest" description="DNA-binding region" evidence="1">
    <location>
        <begin position="185"/>
        <end position="351"/>
    </location>
</feature>
<feature type="region of interest" description="Disordered" evidence="2">
    <location>
        <begin position="620"/>
        <end position="650"/>
    </location>
</feature>
<feature type="short sequence motif" description="Nuclear localization signal" evidence="1">
    <location>
        <begin position="88"/>
        <end position="90"/>
    </location>
</feature>
<feature type="short sequence motif" description="Nuclear export signal" evidence="1">
    <location>
        <begin position="108"/>
        <end position="117"/>
    </location>
</feature>
<feature type="compositionally biased region" description="Acidic residues" evidence="2">
    <location>
        <begin position="622"/>
        <end position="633"/>
    </location>
</feature>
<feature type="binding site" evidence="1">
    <location>
        <begin position="476"/>
        <end position="483"/>
    </location>
    <ligand>
        <name>ATP</name>
        <dbReference type="ChEBI" id="CHEBI:30616"/>
    </ligand>
</feature>
<feature type="modified residue" description="Phosphoserine; by host" evidence="1">
    <location>
        <position position="94"/>
    </location>
</feature>
<feature type="modified residue" description="Phosphoserine; by host" evidence="1">
    <location>
        <position position="98"/>
    </location>
</feature>
<feature type="modified residue" description="Phosphoserine; by host" evidence="1">
    <location>
        <position position="109"/>
    </location>
</feature>
<feature type="cross-link" description="Glycyl lysine isopeptide (Lys-Gly) (interchain with G-Cter in SUMO)" evidence="1">
    <location>
        <position position="557"/>
    </location>
</feature>
<gene>
    <name evidence="1" type="primary">E1</name>
</gene>
<keyword id="KW-0067">ATP-binding</keyword>
<keyword id="KW-0235">DNA replication</keyword>
<keyword id="KW-0238">DNA-binding</keyword>
<keyword id="KW-0244">Early protein</keyword>
<keyword id="KW-0347">Helicase</keyword>
<keyword id="KW-1048">Host nucleus</keyword>
<keyword id="KW-0378">Hydrolase</keyword>
<keyword id="KW-0413">Isomerase</keyword>
<keyword id="KW-1017">Isopeptide bond</keyword>
<keyword id="KW-0547">Nucleotide-binding</keyword>
<keyword id="KW-0597">Phosphoprotein</keyword>
<keyword id="KW-0832">Ubl conjugation</keyword>
<proteinExistence type="inferred from homology"/>